<evidence type="ECO:0000250" key="1">
    <source>
        <dbReference type="UniProtKB" id="P33322"/>
    </source>
</evidence>
<evidence type="ECO:0000250" key="2">
    <source>
        <dbReference type="UniProtKB" id="P60340"/>
    </source>
</evidence>
<evidence type="ECO:0000255" key="3">
    <source>
        <dbReference type="PROSITE-ProRule" id="PRU00161"/>
    </source>
</evidence>
<evidence type="ECO:0000256" key="4">
    <source>
        <dbReference type="SAM" id="MobiDB-lite"/>
    </source>
</evidence>
<evidence type="ECO:0000305" key="5"/>
<gene>
    <name type="primary">cbf5</name>
    <name type="ORF">SPAC29A4.04c</name>
</gene>
<dbReference type="EC" id="5.4.99.-" evidence="1"/>
<dbReference type="EMBL" id="CU329670">
    <property type="protein sequence ID" value="CAB10131.1"/>
    <property type="molecule type" value="Genomic_DNA"/>
</dbReference>
<dbReference type="PIR" id="T38485">
    <property type="entry name" value="T38485"/>
</dbReference>
<dbReference type="RefSeq" id="NP_594878.1">
    <property type="nucleotide sequence ID" value="NM_001020307.2"/>
</dbReference>
<dbReference type="SMR" id="O14007"/>
<dbReference type="BioGRID" id="278941">
    <property type="interactions" value="13"/>
</dbReference>
<dbReference type="FunCoup" id="O14007">
    <property type="interactions" value="978"/>
</dbReference>
<dbReference type="STRING" id="284812.O14007"/>
<dbReference type="iPTMnet" id="O14007"/>
<dbReference type="PaxDb" id="4896-SPAC29A4.04c.1"/>
<dbReference type="EnsemblFungi" id="SPAC29A4.04c.1">
    <property type="protein sequence ID" value="SPAC29A4.04c.1:pep"/>
    <property type="gene ID" value="SPAC29A4.04c"/>
</dbReference>
<dbReference type="GeneID" id="2542481"/>
<dbReference type="KEGG" id="spo:2542481"/>
<dbReference type="PomBase" id="SPAC29A4.04c">
    <property type="gene designation" value="cbf5"/>
</dbReference>
<dbReference type="VEuPathDB" id="FungiDB:SPAC29A4.04c"/>
<dbReference type="eggNOG" id="KOG2529">
    <property type="taxonomic scope" value="Eukaryota"/>
</dbReference>
<dbReference type="HOGENOM" id="CLU_032087_3_2_1"/>
<dbReference type="InParanoid" id="O14007"/>
<dbReference type="OMA" id="KYGRTNE"/>
<dbReference type="PhylomeDB" id="O14007"/>
<dbReference type="Reactome" id="R-SPO-171319">
    <property type="pathway name" value="Telomere Extension By Telomerase"/>
</dbReference>
<dbReference type="PRO" id="PR:O14007"/>
<dbReference type="Proteomes" id="UP000002485">
    <property type="component" value="Chromosome I"/>
</dbReference>
<dbReference type="GO" id="GO:0031429">
    <property type="term" value="C:box H/ACA snoRNP complex"/>
    <property type="evidence" value="ECO:0000318"/>
    <property type="project" value="GO_Central"/>
</dbReference>
<dbReference type="GO" id="GO:0005829">
    <property type="term" value="C:cytosol"/>
    <property type="evidence" value="ECO:0007005"/>
    <property type="project" value="PomBase"/>
</dbReference>
<dbReference type="GO" id="GO:0034513">
    <property type="term" value="F:box H/ACA snoRNA binding"/>
    <property type="evidence" value="ECO:0000305"/>
    <property type="project" value="PomBase"/>
</dbReference>
<dbReference type="GO" id="GO:0009982">
    <property type="term" value="F:pseudouridine synthase activity"/>
    <property type="evidence" value="ECO:0000318"/>
    <property type="project" value="GO_Central"/>
</dbReference>
<dbReference type="GO" id="GO:0019843">
    <property type="term" value="F:rRNA binding"/>
    <property type="evidence" value="ECO:0000266"/>
    <property type="project" value="PomBase"/>
</dbReference>
<dbReference type="GO" id="GO:0106032">
    <property type="term" value="F:snRNA pseudouridine synthase activity"/>
    <property type="evidence" value="ECO:0007669"/>
    <property type="project" value="RHEA"/>
</dbReference>
<dbReference type="GO" id="GO:0000495">
    <property type="term" value="P:box H/ACA sno(s)RNA 3'-end processing"/>
    <property type="evidence" value="ECO:0000318"/>
    <property type="project" value="GO_Central"/>
</dbReference>
<dbReference type="GO" id="GO:1990481">
    <property type="term" value="P:mRNA pseudouridine synthesis"/>
    <property type="evidence" value="ECO:0000318"/>
    <property type="project" value="GO_Central"/>
</dbReference>
<dbReference type="GO" id="GO:0031118">
    <property type="term" value="P:rRNA pseudouridine synthesis"/>
    <property type="evidence" value="ECO:0000318"/>
    <property type="project" value="GO_Central"/>
</dbReference>
<dbReference type="GO" id="GO:0031120">
    <property type="term" value="P:snRNA pseudouridine synthesis"/>
    <property type="evidence" value="ECO:0000318"/>
    <property type="project" value="GO_Central"/>
</dbReference>
<dbReference type="CDD" id="cd02572">
    <property type="entry name" value="PseudoU_synth_hDyskerin"/>
    <property type="match status" value="1"/>
</dbReference>
<dbReference type="CDD" id="cd21148">
    <property type="entry name" value="PUA_Cbf5"/>
    <property type="match status" value="1"/>
</dbReference>
<dbReference type="FunFam" id="3.30.2350.10:FF:000001">
    <property type="entry name" value="H/ACA ribonucleoprotein complex subunit CBF5"/>
    <property type="match status" value="1"/>
</dbReference>
<dbReference type="Gene3D" id="3.30.2350.10">
    <property type="entry name" value="Pseudouridine synthase"/>
    <property type="match status" value="1"/>
</dbReference>
<dbReference type="Gene3D" id="2.30.130.10">
    <property type="entry name" value="PUA domain"/>
    <property type="match status" value="1"/>
</dbReference>
<dbReference type="InterPro" id="IPR012960">
    <property type="entry name" value="Dyskerin-like"/>
</dbReference>
<dbReference type="InterPro" id="IPR020103">
    <property type="entry name" value="PsdUridine_synth_cat_dom_sf"/>
</dbReference>
<dbReference type="InterPro" id="IPR002501">
    <property type="entry name" value="PsdUridine_synth_N"/>
</dbReference>
<dbReference type="InterPro" id="IPR002478">
    <property type="entry name" value="PUA"/>
</dbReference>
<dbReference type="InterPro" id="IPR015947">
    <property type="entry name" value="PUA-like_sf"/>
</dbReference>
<dbReference type="InterPro" id="IPR036974">
    <property type="entry name" value="PUA_sf"/>
</dbReference>
<dbReference type="InterPro" id="IPR004802">
    <property type="entry name" value="tRNA_PsdUridine_synth_B_fam"/>
</dbReference>
<dbReference type="InterPro" id="IPR032819">
    <property type="entry name" value="TruB_C"/>
</dbReference>
<dbReference type="InterPro" id="IPR004521">
    <property type="entry name" value="Uncharacterised_CHP00451"/>
</dbReference>
<dbReference type="NCBIfam" id="TIGR00425">
    <property type="entry name" value="CBF5"/>
    <property type="match status" value="1"/>
</dbReference>
<dbReference type="NCBIfam" id="NF003280">
    <property type="entry name" value="PRK04270.1"/>
    <property type="match status" value="1"/>
</dbReference>
<dbReference type="NCBIfam" id="TIGR00451">
    <property type="entry name" value="unchar_dom_2"/>
    <property type="match status" value="1"/>
</dbReference>
<dbReference type="PANTHER" id="PTHR23127">
    <property type="entry name" value="CENTROMERE/MICROTUBULE BINDING PROTEIN CBF5"/>
    <property type="match status" value="1"/>
</dbReference>
<dbReference type="PANTHER" id="PTHR23127:SF0">
    <property type="entry name" value="H_ACA RIBONUCLEOPROTEIN COMPLEX SUBUNIT DKC1"/>
    <property type="match status" value="1"/>
</dbReference>
<dbReference type="Pfam" id="PF08068">
    <property type="entry name" value="DKCLD"/>
    <property type="match status" value="1"/>
</dbReference>
<dbReference type="Pfam" id="PF01472">
    <property type="entry name" value="PUA"/>
    <property type="match status" value="1"/>
</dbReference>
<dbReference type="Pfam" id="PF16198">
    <property type="entry name" value="TruB_C_2"/>
    <property type="match status" value="1"/>
</dbReference>
<dbReference type="Pfam" id="PF01509">
    <property type="entry name" value="TruB_N"/>
    <property type="match status" value="1"/>
</dbReference>
<dbReference type="SMART" id="SM01136">
    <property type="entry name" value="DKCLD"/>
    <property type="match status" value="1"/>
</dbReference>
<dbReference type="SMART" id="SM00359">
    <property type="entry name" value="PUA"/>
    <property type="match status" value="1"/>
</dbReference>
<dbReference type="SUPFAM" id="SSF55120">
    <property type="entry name" value="Pseudouridine synthase"/>
    <property type="match status" value="1"/>
</dbReference>
<dbReference type="SUPFAM" id="SSF88697">
    <property type="entry name" value="PUA domain-like"/>
    <property type="match status" value="1"/>
</dbReference>
<dbReference type="PROSITE" id="PS50890">
    <property type="entry name" value="PUA"/>
    <property type="match status" value="1"/>
</dbReference>
<feature type="chain" id="PRO_0000121981" description="H/ACA ribonucleoprotein complex subunit cbf5">
    <location>
        <begin position="1"/>
        <end position="474"/>
    </location>
</feature>
<feature type="domain" description="PUA" evidence="3">
    <location>
        <begin position="271"/>
        <end position="346"/>
    </location>
</feature>
<feature type="repeat" description="1">
    <location>
        <begin position="443"/>
        <end position="445"/>
    </location>
</feature>
<feature type="repeat" description="2">
    <location>
        <begin position="450"/>
        <end position="452"/>
    </location>
</feature>
<feature type="repeat" description="3">
    <location>
        <begin position="454"/>
        <end position="456"/>
    </location>
</feature>
<feature type="repeat" description="4">
    <location>
        <begin position="457"/>
        <end position="459"/>
    </location>
</feature>
<feature type="repeat" description="5">
    <location>
        <begin position="460"/>
        <end position="462"/>
    </location>
</feature>
<feature type="repeat" description="6">
    <location>
        <begin position="463"/>
        <end position="465"/>
    </location>
</feature>
<feature type="repeat" description="7">
    <location>
        <begin position="466"/>
        <end position="468"/>
    </location>
</feature>
<feature type="region of interest" description="Disordered" evidence="4">
    <location>
        <begin position="361"/>
        <end position="391"/>
    </location>
</feature>
<feature type="region of interest" description="Disordered" evidence="4">
    <location>
        <begin position="406"/>
        <end position="474"/>
    </location>
</feature>
<feature type="region of interest" description="7 X 3 AA approximate tandem repeats of K-K-E">
    <location>
        <begin position="434"/>
        <end position="468"/>
    </location>
</feature>
<feature type="compositionally biased region" description="Basic and acidic residues" evidence="4">
    <location>
        <begin position="368"/>
        <end position="378"/>
    </location>
</feature>
<feature type="compositionally biased region" description="Low complexity" evidence="4">
    <location>
        <begin position="406"/>
        <end position="419"/>
    </location>
</feature>
<feature type="compositionally biased region" description="Basic and acidic residues" evidence="4">
    <location>
        <begin position="423"/>
        <end position="434"/>
    </location>
</feature>
<feature type="compositionally biased region" description="Basic residues" evidence="4">
    <location>
        <begin position="446"/>
        <end position="474"/>
    </location>
</feature>
<feature type="active site" description="Nucleophile" evidence="2">
    <location>
        <position position="100"/>
    </location>
</feature>
<protein>
    <recommendedName>
        <fullName evidence="5">H/ACA ribonucleoprotein complex subunit cbf5</fullName>
        <ecNumber evidence="1">5.4.99.-</ecNumber>
    </recommendedName>
    <alternativeName>
        <fullName>Centromere-binding factor 5 homolog</fullName>
    </alternativeName>
</protein>
<comment type="function">
    <text evidence="1">Catalytic subunit of H/ACA small nucleolar ribonucleoprotein (H/ACA snoRNP) complex, which catalyzes pseudouridylation of rRNA. This involves the isomerization of uridine such that the ribose is subsequently attached to C5, instead of the normal N1. Pseudouridine ('psi') residues may serve to stabilize the conformation of rRNAs and play a central role in ribosomal RNA processing. The H/ACA snoRNP complex also mediates pseudouridylation of other types of RNAs. Catalyzes pseudouridylation at position 93 in U2 snRNA. Also catalyzes pseudouridylation of mRNAs; H/ACA-type snoRNAs probably guide pseudouridylation of mRNAs.</text>
</comment>
<comment type="catalytic activity">
    <reaction evidence="1">
        <text>uridine in 5S rRNA = pseudouridine in 5S rRNA</text>
        <dbReference type="Rhea" id="RHEA:47036"/>
        <dbReference type="Rhea" id="RHEA-COMP:11730"/>
        <dbReference type="Rhea" id="RHEA-COMP:11731"/>
        <dbReference type="ChEBI" id="CHEBI:65314"/>
        <dbReference type="ChEBI" id="CHEBI:65315"/>
    </reaction>
</comment>
<comment type="catalytic activity">
    <reaction evidence="1">
        <text>uridine in snRNA = pseudouridine in snRNA</text>
        <dbReference type="Rhea" id="RHEA:51124"/>
        <dbReference type="Rhea" id="RHEA-COMP:12891"/>
        <dbReference type="Rhea" id="RHEA-COMP:12892"/>
        <dbReference type="ChEBI" id="CHEBI:65314"/>
        <dbReference type="ChEBI" id="CHEBI:65315"/>
    </reaction>
</comment>
<comment type="catalytic activity">
    <reaction evidence="1">
        <text>a uridine in mRNA = a pseudouridine in mRNA</text>
        <dbReference type="Rhea" id="RHEA:56644"/>
        <dbReference type="Rhea" id="RHEA-COMP:14658"/>
        <dbReference type="Rhea" id="RHEA-COMP:14659"/>
        <dbReference type="ChEBI" id="CHEBI:65314"/>
        <dbReference type="ChEBI" id="CHEBI:65315"/>
    </reaction>
</comment>
<comment type="subunit">
    <text evidence="1">Component of the small nucleolar ribonucleoprotein particles containing H/ACA-type snoRNAs (H/ACA snoRNPs).</text>
</comment>
<comment type="subcellular location">
    <subcellularLocation>
        <location evidence="1">Nucleus</location>
        <location evidence="1">Nucleolus</location>
    </subcellularLocation>
</comment>
<comment type="similarity">
    <text evidence="5">Belongs to the pseudouridine synthase TruB family.</text>
</comment>
<sequence length="474" mass="53110">MTDTHPGVDFMIKPEATSASKIDTAEWPLLLKNFDKLLVRTGHYTPIPCGNNPLKRPIAEYVSSGVINLDKPANPSSHEVVAWVKKILRVEKTGHSGTLDPKVTGCLIICNDRATRLVKSQQSAGKEYVCVLRLHDSVEGERNVASAIETLTGALFQRPPLISAVKRQLRIRSIYESKLIEFDNERNLAVFWASCEAGTYMRTLCVHLGLLLGVGGHMQELRRVRSGCLSENDDIVTMHDVLDAQWIYDNTRDESYLRRVIRPLESLLVGYKRIVVKDSAVNAICYGAKLMIPGLLRYEAGIEVNEEIVLITTKGEAIAVGIAQMSTVELSTCDHGVVAKVKRCIMERDVYPRRWGLGPQSMKKKTLKKEGKLDKYGRPNENTPADWSKSYIDYSDPNAEVAKPAPVVAPAAPTVEAEVNGVEDSKKRKSVESSEKDEDEAAKKEEKRRKKEAKKEKKEKKEKKEKKEKKKKSE</sequence>
<reference key="1">
    <citation type="journal article" date="2002" name="Nature">
        <title>The genome sequence of Schizosaccharomyces pombe.</title>
        <authorList>
            <person name="Wood V."/>
            <person name="Gwilliam R."/>
            <person name="Rajandream M.A."/>
            <person name="Lyne M.H."/>
            <person name="Lyne R."/>
            <person name="Stewart A."/>
            <person name="Sgouros J.G."/>
            <person name="Peat N."/>
            <person name="Hayles J."/>
            <person name="Baker S.G."/>
            <person name="Basham D."/>
            <person name="Bowman S."/>
            <person name="Brooks K."/>
            <person name="Brown D."/>
            <person name="Brown S."/>
            <person name="Chillingworth T."/>
            <person name="Churcher C.M."/>
            <person name="Collins M."/>
            <person name="Connor R."/>
            <person name="Cronin A."/>
            <person name="Davis P."/>
            <person name="Feltwell T."/>
            <person name="Fraser A."/>
            <person name="Gentles S."/>
            <person name="Goble A."/>
            <person name="Hamlin N."/>
            <person name="Harris D.E."/>
            <person name="Hidalgo J."/>
            <person name="Hodgson G."/>
            <person name="Holroyd S."/>
            <person name="Hornsby T."/>
            <person name="Howarth S."/>
            <person name="Huckle E.J."/>
            <person name="Hunt S."/>
            <person name="Jagels K."/>
            <person name="James K.D."/>
            <person name="Jones L."/>
            <person name="Jones M."/>
            <person name="Leather S."/>
            <person name="McDonald S."/>
            <person name="McLean J."/>
            <person name="Mooney P."/>
            <person name="Moule S."/>
            <person name="Mungall K.L."/>
            <person name="Murphy L.D."/>
            <person name="Niblett D."/>
            <person name="Odell C."/>
            <person name="Oliver K."/>
            <person name="O'Neil S."/>
            <person name="Pearson D."/>
            <person name="Quail M.A."/>
            <person name="Rabbinowitsch E."/>
            <person name="Rutherford K.M."/>
            <person name="Rutter S."/>
            <person name="Saunders D."/>
            <person name="Seeger K."/>
            <person name="Sharp S."/>
            <person name="Skelton J."/>
            <person name="Simmonds M.N."/>
            <person name="Squares R."/>
            <person name="Squares S."/>
            <person name="Stevens K."/>
            <person name="Taylor K."/>
            <person name="Taylor R.G."/>
            <person name="Tivey A."/>
            <person name="Walsh S.V."/>
            <person name="Warren T."/>
            <person name="Whitehead S."/>
            <person name="Woodward J.R."/>
            <person name="Volckaert G."/>
            <person name="Aert R."/>
            <person name="Robben J."/>
            <person name="Grymonprez B."/>
            <person name="Weltjens I."/>
            <person name="Vanstreels E."/>
            <person name="Rieger M."/>
            <person name="Schaefer M."/>
            <person name="Mueller-Auer S."/>
            <person name="Gabel C."/>
            <person name="Fuchs M."/>
            <person name="Duesterhoeft A."/>
            <person name="Fritzc C."/>
            <person name="Holzer E."/>
            <person name="Moestl D."/>
            <person name="Hilbert H."/>
            <person name="Borzym K."/>
            <person name="Langer I."/>
            <person name="Beck A."/>
            <person name="Lehrach H."/>
            <person name="Reinhardt R."/>
            <person name="Pohl T.M."/>
            <person name="Eger P."/>
            <person name="Zimmermann W."/>
            <person name="Wedler H."/>
            <person name="Wambutt R."/>
            <person name="Purnelle B."/>
            <person name="Goffeau A."/>
            <person name="Cadieu E."/>
            <person name="Dreano S."/>
            <person name="Gloux S."/>
            <person name="Lelaure V."/>
            <person name="Mottier S."/>
            <person name="Galibert F."/>
            <person name="Aves S.J."/>
            <person name="Xiang Z."/>
            <person name="Hunt C."/>
            <person name="Moore K."/>
            <person name="Hurst S.M."/>
            <person name="Lucas M."/>
            <person name="Rochet M."/>
            <person name="Gaillardin C."/>
            <person name="Tallada V.A."/>
            <person name="Garzon A."/>
            <person name="Thode G."/>
            <person name="Daga R.R."/>
            <person name="Cruzado L."/>
            <person name="Jimenez J."/>
            <person name="Sanchez M."/>
            <person name="del Rey F."/>
            <person name="Benito J."/>
            <person name="Dominguez A."/>
            <person name="Revuelta J.L."/>
            <person name="Moreno S."/>
            <person name="Armstrong J."/>
            <person name="Forsburg S.L."/>
            <person name="Cerutti L."/>
            <person name="Lowe T."/>
            <person name="McCombie W.R."/>
            <person name="Paulsen I."/>
            <person name="Potashkin J."/>
            <person name="Shpakovski G.V."/>
            <person name="Ussery D."/>
            <person name="Barrell B.G."/>
            <person name="Nurse P."/>
        </authorList>
    </citation>
    <scope>NUCLEOTIDE SEQUENCE [LARGE SCALE GENOMIC DNA]</scope>
    <source>
        <strain>972 / ATCC 24843</strain>
    </source>
</reference>
<accession>O14007</accession>
<organism>
    <name type="scientific">Schizosaccharomyces pombe (strain 972 / ATCC 24843)</name>
    <name type="common">Fission yeast</name>
    <dbReference type="NCBI Taxonomy" id="284812"/>
    <lineage>
        <taxon>Eukaryota</taxon>
        <taxon>Fungi</taxon>
        <taxon>Dikarya</taxon>
        <taxon>Ascomycota</taxon>
        <taxon>Taphrinomycotina</taxon>
        <taxon>Schizosaccharomycetes</taxon>
        <taxon>Schizosaccharomycetales</taxon>
        <taxon>Schizosaccharomycetaceae</taxon>
        <taxon>Schizosaccharomyces</taxon>
    </lineage>
</organism>
<keyword id="KW-0413">Isomerase</keyword>
<keyword id="KW-0539">Nucleus</keyword>
<keyword id="KW-1185">Reference proteome</keyword>
<keyword id="KW-0677">Repeat</keyword>
<keyword id="KW-0687">Ribonucleoprotein</keyword>
<keyword id="KW-0690">Ribosome biogenesis</keyword>
<keyword id="KW-0694">RNA-binding</keyword>
<keyword id="KW-0698">rRNA processing</keyword>
<name>CBF5_SCHPO</name>
<proteinExistence type="inferred from homology"/>